<organism>
    <name type="scientific">Prochlorococcus marinus (strain NATL2A)</name>
    <dbReference type="NCBI Taxonomy" id="59920"/>
    <lineage>
        <taxon>Bacteria</taxon>
        <taxon>Bacillati</taxon>
        <taxon>Cyanobacteriota</taxon>
        <taxon>Cyanophyceae</taxon>
        <taxon>Synechococcales</taxon>
        <taxon>Prochlorococcaceae</taxon>
        <taxon>Prochlorococcus</taxon>
    </lineage>
</organism>
<reference key="1">
    <citation type="journal article" date="2007" name="PLoS Genet.">
        <title>Patterns and implications of gene gain and loss in the evolution of Prochlorococcus.</title>
        <authorList>
            <person name="Kettler G.C."/>
            <person name="Martiny A.C."/>
            <person name="Huang K."/>
            <person name="Zucker J."/>
            <person name="Coleman M.L."/>
            <person name="Rodrigue S."/>
            <person name="Chen F."/>
            <person name="Lapidus A."/>
            <person name="Ferriera S."/>
            <person name="Johnson J."/>
            <person name="Steglich C."/>
            <person name="Church G.M."/>
            <person name="Richardson P."/>
            <person name="Chisholm S.W."/>
        </authorList>
    </citation>
    <scope>NUCLEOTIDE SEQUENCE [LARGE SCALE GENOMIC DNA]</scope>
    <source>
        <strain>NATL2A</strain>
    </source>
</reference>
<gene>
    <name evidence="2" type="primary">rpsL</name>
    <name evidence="2" type="synonym">rps12</name>
    <name type="ordered locus">PMN2A_1077</name>
</gene>
<accession>Q46IW1</accession>
<protein>
    <recommendedName>
        <fullName evidence="2">Small ribosomal subunit protein uS12</fullName>
    </recommendedName>
    <alternativeName>
        <fullName evidence="4">30S ribosomal protein S12</fullName>
    </alternativeName>
</protein>
<evidence type="ECO:0000250" key="1"/>
<evidence type="ECO:0000255" key="2">
    <source>
        <dbReference type="HAMAP-Rule" id="MF_00403"/>
    </source>
</evidence>
<evidence type="ECO:0000256" key="3">
    <source>
        <dbReference type="SAM" id="MobiDB-lite"/>
    </source>
</evidence>
<evidence type="ECO:0000305" key="4"/>
<keyword id="KW-0488">Methylation</keyword>
<keyword id="KW-1185">Reference proteome</keyword>
<keyword id="KW-0687">Ribonucleoprotein</keyword>
<keyword id="KW-0689">Ribosomal protein</keyword>
<keyword id="KW-0694">RNA-binding</keyword>
<keyword id="KW-0699">rRNA-binding</keyword>
<keyword id="KW-0820">tRNA-binding</keyword>
<name>RS12_PROMT</name>
<feature type="chain" id="PRO_0000226402" description="Small ribosomal subunit protein uS12">
    <location>
        <begin position="1"/>
        <end position="124"/>
    </location>
</feature>
<feature type="region of interest" description="Disordered" evidence="3">
    <location>
        <begin position="103"/>
        <end position="124"/>
    </location>
</feature>
<feature type="modified residue" description="3-methylthioaspartic acid" evidence="1">
    <location>
        <position position="89"/>
    </location>
</feature>
<dbReference type="EMBL" id="CP000095">
    <property type="protein sequence ID" value="AAZ58567.1"/>
    <property type="molecule type" value="Genomic_DNA"/>
</dbReference>
<dbReference type="RefSeq" id="WP_011295421.1">
    <property type="nucleotide sequence ID" value="NC_007335.2"/>
</dbReference>
<dbReference type="SMR" id="Q46IW1"/>
<dbReference type="STRING" id="59920.PMN2A_1077"/>
<dbReference type="KEGG" id="pmn:PMN2A_1077"/>
<dbReference type="HOGENOM" id="CLU_104295_1_2_3"/>
<dbReference type="OrthoDB" id="9802366at2"/>
<dbReference type="PhylomeDB" id="Q46IW1"/>
<dbReference type="Proteomes" id="UP000002535">
    <property type="component" value="Chromosome"/>
</dbReference>
<dbReference type="GO" id="GO:0015935">
    <property type="term" value="C:small ribosomal subunit"/>
    <property type="evidence" value="ECO:0007669"/>
    <property type="project" value="InterPro"/>
</dbReference>
<dbReference type="GO" id="GO:0019843">
    <property type="term" value="F:rRNA binding"/>
    <property type="evidence" value="ECO:0007669"/>
    <property type="project" value="UniProtKB-UniRule"/>
</dbReference>
<dbReference type="GO" id="GO:0003735">
    <property type="term" value="F:structural constituent of ribosome"/>
    <property type="evidence" value="ECO:0007669"/>
    <property type="project" value="InterPro"/>
</dbReference>
<dbReference type="GO" id="GO:0000049">
    <property type="term" value="F:tRNA binding"/>
    <property type="evidence" value="ECO:0007669"/>
    <property type="project" value="UniProtKB-UniRule"/>
</dbReference>
<dbReference type="GO" id="GO:0006412">
    <property type="term" value="P:translation"/>
    <property type="evidence" value="ECO:0007669"/>
    <property type="project" value="UniProtKB-UniRule"/>
</dbReference>
<dbReference type="CDD" id="cd03368">
    <property type="entry name" value="Ribosomal_S12"/>
    <property type="match status" value="1"/>
</dbReference>
<dbReference type="FunFam" id="2.40.50.140:FF:000001">
    <property type="entry name" value="30S ribosomal protein S12"/>
    <property type="match status" value="1"/>
</dbReference>
<dbReference type="Gene3D" id="2.40.50.140">
    <property type="entry name" value="Nucleic acid-binding proteins"/>
    <property type="match status" value="1"/>
</dbReference>
<dbReference type="HAMAP" id="MF_00403_B">
    <property type="entry name" value="Ribosomal_uS12_B"/>
    <property type="match status" value="1"/>
</dbReference>
<dbReference type="InterPro" id="IPR012340">
    <property type="entry name" value="NA-bd_OB-fold"/>
</dbReference>
<dbReference type="InterPro" id="IPR006032">
    <property type="entry name" value="Ribosomal_uS12"/>
</dbReference>
<dbReference type="InterPro" id="IPR005679">
    <property type="entry name" value="Ribosomal_uS12_bac"/>
</dbReference>
<dbReference type="NCBIfam" id="TIGR00981">
    <property type="entry name" value="rpsL_bact"/>
    <property type="match status" value="1"/>
</dbReference>
<dbReference type="PANTHER" id="PTHR11652">
    <property type="entry name" value="30S RIBOSOMAL PROTEIN S12 FAMILY MEMBER"/>
    <property type="match status" value="1"/>
</dbReference>
<dbReference type="Pfam" id="PF00164">
    <property type="entry name" value="Ribosom_S12_S23"/>
    <property type="match status" value="1"/>
</dbReference>
<dbReference type="PIRSF" id="PIRSF002133">
    <property type="entry name" value="Ribosomal_S12/S23"/>
    <property type="match status" value="1"/>
</dbReference>
<dbReference type="PRINTS" id="PR01034">
    <property type="entry name" value="RIBOSOMALS12"/>
</dbReference>
<dbReference type="SUPFAM" id="SSF50249">
    <property type="entry name" value="Nucleic acid-binding proteins"/>
    <property type="match status" value="1"/>
</dbReference>
<dbReference type="PROSITE" id="PS00055">
    <property type="entry name" value="RIBOSOMAL_S12"/>
    <property type="match status" value="1"/>
</dbReference>
<sequence length="124" mass="13810">MPTIQQLIRTERKTLKTKTKSPALRGCPERRGVCTRVYTSTPKKPNSALRKVARVRLTSGFEVTAYIGGIGHNLQEHSVVLLRGGRVKDLPGVRYHIVRGSLDTAGVKDRRQSRSKYGAKSPKE</sequence>
<comment type="function">
    <text evidence="2">With S4 and S5 plays an important role in translational accuracy.</text>
</comment>
<comment type="function">
    <text evidence="2">Interacts with and stabilizes bases of the 16S rRNA that are involved in tRNA selection in the A site and with the mRNA backbone. Located at the interface of the 30S and 50S subunits, it traverses the body of the 30S subunit contacting proteins on the other side and probably holding the rRNA structure together. The combined cluster of proteins S8, S12 and S17 appears to hold together the shoulder and platform of the 30S subunit.</text>
</comment>
<comment type="subunit">
    <text evidence="2">Part of the 30S ribosomal subunit. Contacts proteins S8 and S17. May interact with IF1 in the 30S initiation complex.</text>
</comment>
<comment type="similarity">
    <text evidence="2">Belongs to the universal ribosomal protein uS12 family.</text>
</comment>
<proteinExistence type="inferred from homology"/>